<feature type="chain" id="PRO_0000136288" description="Probable histidine--tRNA ligase">
    <location>
        <begin position="1"/>
        <end position="426"/>
    </location>
</feature>
<accession>Q83FF5</accession>
<gene>
    <name type="primary">hisS</name>
    <name type="ordered locus">TWT_785</name>
</gene>
<name>SYH_TROWT</name>
<reference key="1">
    <citation type="journal article" date="2003" name="Genome Res.">
        <title>Tropheryma whipplei twist: a human pathogenic Actinobacteria with a reduced genome.</title>
        <authorList>
            <person name="Raoult D."/>
            <person name="Ogata H."/>
            <person name="Audic S."/>
            <person name="Robert C."/>
            <person name="Suhre K."/>
            <person name="Drancourt M."/>
            <person name="Claverie J.-M."/>
        </authorList>
    </citation>
    <scope>NUCLEOTIDE SEQUENCE [LARGE SCALE GENOMIC DNA]</scope>
    <source>
        <strain>Twist</strain>
    </source>
</reference>
<protein>
    <recommendedName>
        <fullName>Probable histidine--tRNA ligase</fullName>
        <ecNumber>6.1.1.21</ecNumber>
    </recommendedName>
    <alternativeName>
        <fullName>Histidyl-tRNA synthetase</fullName>
        <shortName>HisRS</shortName>
    </alternativeName>
</protein>
<comment type="catalytic activity">
    <reaction>
        <text>tRNA(His) + L-histidine + ATP = L-histidyl-tRNA(His) + AMP + diphosphate + H(+)</text>
        <dbReference type="Rhea" id="RHEA:17313"/>
        <dbReference type="Rhea" id="RHEA-COMP:9665"/>
        <dbReference type="Rhea" id="RHEA-COMP:9689"/>
        <dbReference type="ChEBI" id="CHEBI:15378"/>
        <dbReference type="ChEBI" id="CHEBI:30616"/>
        <dbReference type="ChEBI" id="CHEBI:33019"/>
        <dbReference type="ChEBI" id="CHEBI:57595"/>
        <dbReference type="ChEBI" id="CHEBI:78442"/>
        <dbReference type="ChEBI" id="CHEBI:78527"/>
        <dbReference type="ChEBI" id="CHEBI:456215"/>
        <dbReference type="EC" id="6.1.1.21"/>
    </reaction>
</comment>
<comment type="subunit">
    <text evidence="1">Homodimer.</text>
</comment>
<comment type="subcellular location">
    <subcellularLocation>
        <location evidence="1">Cytoplasm</location>
    </subcellularLocation>
</comment>
<comment type="similarity">
    <text evidence="2">Belongs to the class-II aminoacyl-tRNA synthetase family.</text>
</comment>
<organism>
    <name type="scientific">Tropheryma whipplei (strain Twist)</name>
    <name type="common">Whipple's bacillus</name>
    <dbReference type="NCBI Taxonomy" id="203267"/>
    <lineage>
        <taxon>Bacteria</taxon>
        <taxon>Bacillati</taxon>
        <taxon>Actinomycetota</taxon>
        <taxon>Actinomycetes</taxon>
        <taxon>Micrococcales</taxon>
        <taxon>Tropherymataceae</taxon>
        <taxon>Tropheryma</taxon>
    </lineage>
</organism>
<dbReference type="EC" id="6.1.1.21"/>
<dbReference type="EMBL" id="AE014184">
    <property type="protein sequence ID" value="AAO44882.1"/>
    <property type="molecule type" value="Genomic_DNA"/>
</dbReference>
<dbReference type="RefSeq" id="WP_011096731.1">
    <property type="nucleotide sequence ID" value="NC_004572.3"/>
</dbReference>
<dbReference type="SMR" id="Q83FF5"/>
<dbReference type="STRING" id="203267.TWT_785"/>
<dbReference type="GeneID" id="67388575"/>
<dbReference type="KEGG" id="twh:TWT_785"/>
<dbReference type="eggNOG" id="COG0124">
    <property type="taxonomic scope" value="Bacteria"/>
</dbReference>
<dbReference type="HOGENOM" id="CLU_025113_3_0_11"/>
<dbReference type="OrthoDB" id="9800814at2"/>
<dbReference type="Proteomes" id="UP000002200">
    <property type="component" value="Chromosome"/>
</dbReference>
<dbReference type="GO" id="GO:0005737">
    <property type="term" value="C:cytoplasm"/>
    <property type="evidence" value="ECO:0007669"/>
    <property type="project" value="UniProtKB-SubCell"/>
</dbReference>
<dbReference type="GO" id="GO:0005524">
    <property type="term" value="F:ATP binding"/>
    <property type="evidence" value="ECO:0007669"/>
    <property type="project" value="UniProtKB-KW"/>
</dbReference>
<dbReference type="GO" id="GO:0004821">
    <property type="term" value="F:histidine-tRNA ligase activity"/>
    <property type="evidence" value="ECO:0007669"/>
    <property type="project" value="UniProtKB-EC"/>
</dbReference>
<dbReference type="GO" id="GO:0006427">
    <property type="term" value="P:histidyl-tRNA aminoacylation"/>
    <property type="evidence" value="ECO:0007669"/>
    <property type="project" value="InterPro"/>
</dbReference>
<dbReference type="CDD" id="cd00773">
    <property type="entry name" value="HisRS-like_core"/>
    <property type="match status" value="1"/>
</dbReference>
<dbReference type="Gene3D" id="3.30.930.10">
    <property type="entry name" value="Bira Bifunctional Protein, Domain 2"/>
    <property type="match status" value="1"/>
</dbReference>
<dbReference type="InterPro" id="IPR006195">
    <property type="entry name" value="aa-tRNA-synth_II"/>
</dbReference>
<dbReference type="InterPro" id="IPR045864">
    <property type="entry name" value="aa-tRNA-synth_II/BPL/LPL"/>
</dbReference>
<dbReference type="InterPro" id="IPR015807">
    <property type="entry name" value="His-tRNA-ligase"/>
</dbReference>
<dbReference type="InterPro" id="IPR041715">
    <property type="entry name" value="HisRS-like_core"/>
</dbReference>
<dbReference type="InterPro" id="IPR004516">
    <property type="entry name" value="HisRS/HisZ"/>
</dbReference>
<dbReference type="NCBIfam" id="TIGR00442">
    <property type="entry name" value="hisS"/>
    <property type="match status" value="1"/>
</dbReference>
<dbReference type="PANTHER" id="PTHR11476:SF7">
    <property type="entry name" value="HISTIDINE--TRNA LIGASE"/>
    <property type="match status" value="1"/>
</dbReference>
<dbReference type="PANTHER" id="PTHR11476">
    <property type="entry name" value="HISTIDYL-TRNA SYNTHETASE"/>
    <property type="match status" value="1"/>
</dbReference>
<dbReference type="Pfam" id="PF13393">
    <property type="entry name" value="tRNA-synt_His"/>
    <property type="match status" value="1"/>
</dbReference>
<dbReference type="PIRSF" id="PIRSF001549">
    <property type="entry name" value="His-tRNA_synth"/>
    <property type="match status" value="1"/>
</dbReference>
<dbReference type="SUPFAM" id="SSF55681">
    <property type="entry name" value="Class II aaRS and biotin synthetases"/>
    <property type="match status" value="1"/>
</dbReference>
<dbReference type="PROSITE" id="PS50862">
    <property type="entry name" value="AA_TRNA_LIGASE_II"/>
    <property type="match status" value="1"/>
</dbReference>
<sequence length="426" mass="48039">MKIVPPRGMQDFLPHEKEHRDRITEVIYKSYISHGFNPIETPSLENIERLACGVGQENEKLTYKIIRRGLTGAQTVQHPDELIDLGLRFDLTIPLVRFWNTNRARLPKIFRSLQIGHVWRAEKPQKGRRRQFIQCDIDIIGQPEILAEIELLVATLSTLEQLGIRTPKLHINDRRILFSMLNNLGVPHSCHVYVSIVLDKLRKIGLDLVKQELCEFPALVAYLASSVNSNTGSTDLCFDVSSTKDITHIRRTIQSALPHGCKFDCEDLCRIIASVNEFTQTGVFFDPLLVRGMGYYTGPIFEILHDDYSIAGGGRYDGLVERLGGLPTPACGFSIGFERVLGLIKESVSLDPKKMILLYDPKVDPNLVVSVKLEFISKGFIVRPELASRSRRNQIELAKREGFGAFLYLDPLSPPDGLLAKVKPIL</sequence>
<evidence type="ECO:0000250" key="1"/>
<evidence type="ECO:0000305" key="2"/>
<proteinExistence type="inferred from homology"/>
<keyword id="KW-0030">Aminoacyl-tRNA synthetase</keyword>
<keyword id="KW-0067">ATP-binding</keyword>
<keyword id="KW-0963">Cytoplasm</keyword>
<keyword id="KW-0436">Ligase</keyword>
<keyword id="KW-0547">Nucleotide-binding</keyword>
<keyword id="KW-0648">Protein biosynthesis</keyword>
<keyword id="KW-1185">Reference proteome</keyword>